<evidence type="ECO:0000250" key="1"/>
<evidence type="ECO:0000250" key="2">
    <source>
        <dbReference type="UniProtKB" id="P34926"/>
    </source>
</evidence>
<evidence type="ECO:0000250" key="3">
    <source>
        <dbReference type="UniProtKB" id="P78559"/>
    </source>
</evidence>
<evidence type="ECO:0000256" key="4">
    <source>
        <dbReference type="SAM" id="MobiDB-lite"/>
    </source>
</evidence>
<evidence type="ECO:0000269" key="5">
    <source>
    </source>
</evidence>
<evidence type="ECO:0000269" key="6">
    <source>
    </source>
</evidence>
<evidence type="ECO:0000269" key="7">
    <source>
    </source>
</evidence>
<evidence type="ECO:0000303" key="8">
    <source>
    </source>
</evidence>
<evidence type="ECO:0000305" key="9"/>
<evidence type="ECO:0007744" key="10">
    <source>
    </source>
</evidence>
<evidence type="ECO:0007744" key="11">
    <source>
    </source>
</evidence>
<evidence type="ECO:0007744" key="12">
    <source>
    </source>
</evidence>
<evidence type="ECO:0007744" key="13">
    <source>
    </source>
</evidence>
<evidence type="ECO:0007829" key="14">
    <source>
        <dbReference type="PDB" id="5GNV"/>
    </source>
</evidence>
<organism>
    <name type="scientific">Mus musculus</name>
    <name type="common">Mouse</name>
    <dbReference type="NCBI Taxonomy" id="10090"/>
    <lineage>
        <taxon>Eukaryota</taxon>
        <taxon>Metazoa</taxon>
        <taxon>Chordata</taxon>
        <taxon>Craniata</taxon>
        <taxon>Vertebrata</taxon>
        <taxon>Euteleostomi</taxon>
        <taxon>Mammalia</taxon>
        <taxon>Eutheria</taxon>
        <taxon>Euarchontoglires</taxon>
        <taxon>Glires</taxon>
        <taxon>Rodentia</taxon>
        <taxon>Myomorpha</taxon>
        <taxon>Muroidea</taxon>
        <taxon>Muridae</taxon>
        <taxon>Murinae</taxon>
        <taxon>Mus</taxon>
        <taxon>Mus</taxon>
    </lineage>
</organism>
<protein>
    <recommendedName>
        <fullName>Microtubule-associated protein 1A</fullName>
        <shortName>MAP-1A</shortName>
    </recommendedName>
    <component>
        <recommendedName>
            <fullName>MAP1A heavy chain</fullName>
        </recommendedName>
    </component>
    <component>
        <recommendedName>
            <fullName>MAP1 light chain LC2</fullName>
        </recommendedName>
    </component>
</protein>
<keyword id="KW-0002">3D-structure</keyword>
<keyword id="KW-0025">Alternative splicing</keyword>
<keyword id="KW-0963">Cytoplasm</keyword>
<keyword id="KW-0206">Cytoskeleton</keyword>
<keyword id="KW-0493">Microtubule</keyword>
<keyword id="KW-0597">Phosphoprotein</keyword>
<keyword id="KW-1185">Reference proteome</keyword>
<keyword id="KW-0677">Repeat</keyword>
<sequence length="2776" mass="300140">MDGVAEFSEYVSETVDVPSPFDLLEPPTSGGFLKLSKPCCYIFPGGRGDSALFAVNGFNILVDGGSDRKSCFWKLVRHLDRIDSVLLTHIGADNLPGINGLLQRKVAELEEEQSQGSSSYSDWVKNLISPELGVVFFNVPDKLRLPDASRKAKRSIEEACLTLQHLNRLGIQAEPLYRVVSNTIEPLTLFHKMGVGRLDMYVLNPVKDSKEMQFLMQKWAGNSKAKTGIVLANGKEAEISVPYLTSITALVVWLPANPTEKIVRVLFPGNAPQNKILEGLEKLRHLDFLRYPVATQKDLAAGAVPANLKPSKIKHRADSKESLKAAPKTAMSKLAKREEVLEEGAKEARSELAKELAKSEKKAKEPSEKPPEKPSKPERVRTESSEALKAEKRKLIKDKVGKKHLKEKISKLEEKRDKEKKEIKKERKELKKEEGRKEEKKDAKKDEKRKDTKPELKKFSKPDLKPFTPEVRKTLYKAKAPGRLKVDKGRAARGEKELSSEPRTPPAQKGAAPPPAASGHRELALSSPEDLTQDFEELKREERGLLAEPRDTELGEKPLPADASEQGRPSTAIQVTQPPASVLEQEQVEREKEVVPDFPEDKGSKNRAPDSGAEVEREKETWEERKPREAELTPENIAAAREESEPEVKEDVIEKAELEEMEEVHPSDEEEEETKAESFYQKHMQEALKVIPKGREALGGRELGFQGKAPEKETASFLSSLATPAGAAEHVSYIQDETIPGYSETEQTISDEEIHDEPDERPAPPRFPTSTYDLSGPEGPGPFEASQSAESAVPASSSKTYGAPETELTYPPNMVAAPLAEEEHVSSATSITECDKLSSFATSVAEDQSVASLTAPQTEETGKSSLLLDTVTSIPSSRTEATQGLDYVPSAGTISPTSSLEEDKGFKSPPCEDFSVTGESEKKGESVGRGLTGEKAVGKEEKNVTTSEKLSSQYAAVFGAPGHALHPGEPALGEVEERCLSPDDSTVKMASPPPSGPPSAAHTPFHQSPVEEKSEPQDFQEDSWGDTKHAPGVSKEDAEEQTVKPGPEEAMSEEGKVPLSRSPQAQDTLGSLAGGQTGCTIQLLPEQDKAVVFETGEAGAASGAGSLPGEVRTQEPAEPQKDELLGFTDQSFSPEDAESLSVLSVVSPDTAKQEATPRSPCTPKEQQLHKDLWPMVSPEDTQSLSFSEESPSKETSLDISSKQLSPESLGTLQFGELSLGKEEKGPLVKAEDNSCHLAPVSIPEPHTATVSPPTDEAAGEAGLTDESPAGNLPGSSFSHSALSGDRKHSPGEITGPGGHFMTSDSSLTKSPESLSSPAMEDLAMEWGGKAPGSEDRATEQKEKELERKSETLQQKDQILSEKAALVQRDSVMHQKDEALDEENKPGGQQDKTSEQKGRDLDKKDTAVELGKGPEPKGKDLYLEDQGLAEKDKALEQRGAALQQTQAPEPRARAQEHRDLEQKDEHLELRDKTPEEKDKVLVLEDRAPEHIIPQPTQTDRAPEHRSKVDKEQKDEASEEKEQVLEQKDWAREKEGAALDQDNRAAGQKDGTLKEDKTQGQKSSFLEDKSTTPKEMTLDQKSPEKAKGVEQQDGAVPEKTRALGLEESPEEEGKAREQEEKYWKEQDVVQGWRETSPTRGEPVPAWEGKSPEQEVRYWRDRDITLQQDAYWKELSCERKVWFPHELDGQGARPRYSEERESTFLDEGPNEQEITPLQHTPRSPWASDFKDFQEPLPQKGLEVERWLAESPVGLPPEEEDKLTRSPFEIISPPASPPEMTGQRVPSAPGQESPVPDTKSTPPTRNEPTTPSWLAEIPPWVPKDRPLPPAPLSPAPAPPTPAPDPHAPAPFSWGIAEYDSVVAAVQEGAAELEGGPYSPLGKDYRKAEGEREGEGGAGAPDSSSFSSKVPEVTESHTTRDAEQTEPEQREPTPYPDERSFQYADIYEQMMLTGLGPACPTREPPLGASGDWPPHLSTKEEAAGRNKSAEKELSSAVSPPNLHSDTPTFSYASLAGPTIPPRQEPEPGPNVEPSFTPPAVPPRAPISLSQDPSPPLNGSTTSCGPDRRTPSPKEAGRSHWDDGTNDSDLEKGAREQPEKETQSPSPHHPMPVGHPSLWPETEAHSSLSSDSHLGPVRPSLDFPASAFGFSSLQPAPPQLPSPAEPRSAPCGSLAFSGDRALALVPGTPTRTRHDEYLEVTKAPSLDSSLPQLPSPSSPGAPLLSNLPRPASPALSEGSSSEATTPVISSVAERFPPGLEVAEQSSGELGPGNEPAAHSLWDLTPLSPAPLASRDLAPAPAPAPAPSLPGNLGDGTLSCRPECSGELTKKPSPFLSHSGDHEANGPGETSLNPPGFATATAEKEEAEALHAWERGSWPEGAERSSRPDTLLSSEQRPGKSSGGPPCSLSSEVEAGPQGCATDPRPHCGELSPSFLNPPLPPSTDDSDLSTEEARLAGKGGRRRAGRPGATGGPCPMADETPPTSASDSGSSQSDSDVPPETEECPSITAEAALDSDEDGDFLPVDKAGGVSGTHHPRPGHDPPPAPLPDPRPPPPRPDVCMADPEGLSSESGRVERLREKVQGRPGRKAPGRAKPASPARRLDIRGKRSPTPGKGPVDRTSRALPRPRSTPSQVTSEEKDGHSPMSKGLVNGLKAGSTALGSKGSSGPPVYVDLAYIPNHCSGKTADQDFFRRVRASYYVVSGNDPANGEPSRAVLDALLEGKAQWGENLQVTLIPTHDTEVTREWYQQTHEQQQQLNVLVLASSSTVVMQDESFPACKIEF</sequence>
<gene>
    <name type="primary">Map1a</name>
    <name type="synonym">Mtap1</name>
    <name type="synonym">Mtap1a</name>
</gene>
<proteinExistence type="evidence at protein level"/>
<accession>Q9QYR6</accession>
<accession>A2ARN9</accession>
<accession>Q3TQM8</accession>
<accession>Q3TUV8</accession>
<accession>Q3UHB7</accession>
<accession>Q9QZH9</accession>
<accession>Q9QZI0</accession>
<accession>Q9QZI1</accession>
<feature type="chain" id="PRO_0000072753" description="Microtubule-associated protein 1A">
    <location>
        <begin position="1"/>
        <end position="2776"/>
    </location>
</feature>
<feature type="chain" id="PRO_0000418377" description="MAP1A heavy chain">
    <location>
        <begin position="1"/>
        <end position="2542"/>
    </location>
</feature>
<feature type="chain" id="PRO_0000269727" description="MAP1 light chain LC2">
    <location>
        <begin position="2543"/>
        <end position="2776"/>
    </location>
</feature>
<feature type="repeat" description="1">
    <location>
        <begin position="336"/>
        <end position="338"/>
    </location>
</feature>
<feature type="repeat" description="2">
    <location>
        <begin position="415"/>
        <end position="417"/>
    </location>
</feature>
<feature type="repeat" description="3">
    <location>
        <begin position="420"/>
        <end position="422"/>
    </location>
</feature>
<feature type="repeat" description="4">
    <location>
        <begin position="424"/>
        <end position="426"/>
    </location>
</feature>
<feature type="repeat" description="5">
    <location>
        <begin position="427"/>
        <end position="429"/>
    </location>
</feature>
<feature type="repeat" description="6">
    <location>
        <begin position="431"/>
        <end position="433"/>
    </location>
</feature>
<feature type="repeat" description="7">
    <location>
        <begin position="436"/>
        <end position="438"/>
    </location>
</feature>
<feature type="repeat" description="8">
    <location>
        <begin position="440"/>
        <end position="442"/>
    </location>
</feature>
<feature type="repeat" description="9">
    <location>
        <begin position="444"/>
        <end position="446"/>
    </location>
</feature>
<feature type="repeat" description="10">
    <location>
        <begin position="449"/>
        <end position="451"/>
    </location>
</feature>
<feature type="repeat" description="11">
    <location>
        <begin position="539"/>
        <end position="541"/>
    </location>
</feature>
<feature type="region of interest" description="Disordered" evidence="4">
    <location>
        <begin position="310"/>
        <end position="331"/>
    </location>
</feature>
<feature type="region of interest" description="11 X 3 AA approximate repeats of K-K-[DE]">
    <location>
        <begin position="336"/>
        <end position="541"/>
    </location>
</feature>
<feature type="region of interest" description="Disordered" evidence="4">
    <location>
        <begin position="345"/>
        <end position="678"/>
    </location>
</feature>
<feature type="region of interest" description="Disordered" evidence="4">
    <location>
        <begin position="738"/>
        <end position="809"/>
    </location>
</feature>
<feature type="region of interest" description="Disordered" evidence="4">
    <location>
        <begin position="846"/>
        <end position="1076"/>
    </location>
</feature>
<feature type="region of interest" description="Disordered" evidence="4">
    <location>
        <begin position="1094"/>
        <end position="1210"/>
    </location>
</feature>
<feature type="region of interest" description="Disordered" evidence="4">
    <location>
        <begin position="1223"/>
        <end position="1651"/>
    </location>
</feature>
<feature type="region of interest" description="Disordered" evidence="4">
    <location>
        <begin position="1685"/>
        <end position="1729"/>
    </location>
</feature>
<feature type="region of interest" description="Disordered" evidence="4">
    <location>
        <begin position="1744"/>
        <end position="1848"/>
    </location>
</feature>
<feature type="region of interest" description="Disordered" evidence="4">
    <location>
        <begin position="1866"/>
        <end position="2648"/>
    </location>
</feature>
<feature type="compositionally biased region" description="Basic and acidic residues" evidence="4">
    <location>
        <begin position="345"/>
        <end position="390"/>
    </location>
</feature>
<feature type="compositionally biased region" description="Basic residues" evidence="4">
    <location>
        <begin position="391"/>
        <end position="406"/>
    </location>
</feature>
<feature type="compositionally biased region" description="Basic and acidic residues" evidence="4">
    <location>
        <begin position="407"/>
        <end position="464"/>
    </location>
</feature>
<feature type="compositionally biased region" description="Basic and acidic residues" evidence="4">
    <location>
        <begin position="484"/>
        <end position="500"/>
    </location>
</feature>
<feature type="compositionally biased region" description="Basic and acidic residues" evidence="4">
    <location>
        <begin position="536"/>
        <end position="556"/>
    </location>
</feature>
<feature type="compositionally biased region" description="Polar residues" evidence="4">
    <location>
        <begin position="567"/>
        <end position="579"/>
    </location>
</feature>
<feature type="compositionally biased region" description="Basic and acidic residues" evidence="4">
    <location>
        <begin position="587"/>
        <end position="631"/>
    </location>
</feature>
<feature type="compositionally biased region" description="Basic and acidic residues" evidence="4">
    <location>
        <begin position="640"/>
        <end position="667"/>
    </location>
</feature>
<feature type="compositionally biased region" description="Polar residues" evidence="4">
    <location>
        <begin position="785"/>
        <end position="800"/>
    </location>
</feature>
<feature type="compositionally biased region" description="Polar residues" evidence="4">
    <location>
        <begin position="846"/>
        <end position="859"/>
    </location>
</feature>
<feature type="compositionally biased region" description="Polar residues" evidence="4">
    <location>
        <begin position="870"/>
        <end position="882"/>
    </location>
</feature>
<feature type="compositionally biased region" description="Polar residues" evidence="4">
    <location>
        <begin position="944"/>
        <end position="954"/>
    </location>
</feature>
<feature type="compositionally biased region" description="Low complexity" evidence="4">
    <location>
        <begin position="1096"/>
        <end position="1105"/>
    </location>
</feature>
<feature type="compositionally biased region" description="Basic and acidic residues" evidence="4">
    <location>
        <begin position="1112"/>
        <end position="1124"/>
    </location>
</feature>
<feature type="compositionally biased region" description="Polar residues" evidence="4">
    <location>
        <begin position="1179"/>
        <end position="1189"/>
    </location>
</feature>
<feature type="compositionally biased region" description="Polar residues" evidence="4">
    <location>
        <begin position="1197"/>
        <end position="1210"/>
    </location>
</feature>
<feature type="compositionally biased region" description="Basic and acidic residues" evidence="4">
    <location>
        <begin position="1223"/>
        <end position="1234"/>
    </location>
</feature>
<feature type="compositionally biased region" description="Low complexity" evidence="4">
    <location>
        <begin position="1302"/>
        <end position="1317"/>
    </location>
</feature>
<feature type="compositionally biased region" description="Basic and acidic residues" evidence="4">
    <location>
        <begin position="1332"/>
        <end position="1350"/>
    </location>
</feature>
<feature type="compositionally biased region" description="Basic and acidic residues" evidence="4">
    <location>
        <begin position="1370"/>
        <end position="1384"/>
    </location>
</feature>
<feature type="compositionally biased region" description="Basic and acidic residues" evidence="4">
    <location>
        <begin position="1391"/>
        <end position="1435"/>
    </location>
</feature>
<feature type="compositionally biased region" description="Basic and acidic residues" evidence="4">
    <location>
        <begin position="1449"/>
        <end position="1488"/>
    </location>
</feature>
<feature type="compositionally biased region" description="Basic and acidic residues" evidence="4">
    <location>
        <begin position="1499"/>
        <end position="1541"/>
    </location>
</feature>
<feature type="compositionally biased region" description="Basic and acidic residues" evidence="4">
    <location>
        <begin position="1549"/>
        <end position="1599"/>
    </location>
</feature>
<feature type="compositionally biased region" description="Basic and acidic residues" evidence="4">
    <location>
        <begin position="1609"/>
        <end position="1625"/>
    </location>
</feature>
<feature type="compositionally biased region" description="Polar residues" evidence="4">
    <location>
        <begin position="1709"/>
        <end position="1718"/>
    </location>
</feature>
<feature type="compositionally biased region" description="Polar residues" evidence="4">
    <location>
        <begin position="1794"/>
        <end position="1808"/>
    </location>
</feature>
<feature type="compositionally biased region" description="Pro residues" evidence="4">
    <location>
        <begin position="1823"/>
        <end position="1844"/>
    </location>
</feature>
<feature type="compositionally biased region" description="Basic and acidic residues" evidence="4">
    <location>
        <begin position="1878"/>
        <end position="1890"/>
    </location>
</feature>
<feature type="compositionally biased region" description="Basic and acidic residues" evidence="4">
    <location>
        <begin position="1907"/>
        <end position="1935"/>
    </location>
</feature>
<feature type="compositionally biased region" description="Basic and acidic residues" evidence="4">
    <location>
        <begin position="1972"/>
        <end position="1988"/>
    </location>
</feature>
<feature type="compositionally biased region" description="Polar residues" evidence="4">
    <location>
        <begin position="1990"/>
        <end position="2006"/>
    </location>
</feature>
<feature type="compositionally biased region" description="Pro residues" evidence="4">
    <location>
        <begin position="2013"/>
        <end position="2039"/>
    </location>
</feature>
<feature type="compositionally biased region" description="Polar residues" evidence="4">
    <location>
        <begin position="2042"/>
        <end position="2058"/>
    </location>
</feature>
<feature type="compositionally biased region" description="Basic and acidic residues" evidence="4">
    <location>
        <begin position="2060"/>
        <end position="2096"/>
    </location>
</feature>
<feature type="compositionally biased region" description="Pro residues" evidence="4">
    <location>
        <begin position="2149"/>
        <end position="2158"/>
    </location>
</feature>
<feature type="compositionally biased region" description="Polar residues" evidence="4">
    <location>
        <begin position="2231"/>
        <end position="2242"/>
    </location>
</feature>
<feature type="compositionally biased region" description="Low complexity" evidence="4">
    <location>
        <begin position="2279"/>
        <end position="2292"/>
    </location>
</feature>
<feature type="compositionally biased region" description="Basic and acidic residues" evidence="4">
    <location>
        <begin position="2355"/>
        <end position="2367"/>
    </location>
</feature>
<feature type="compositionally biased region" description="Low complexity" evidence="4">
    <location>
        <begin position="2478"/>
        <end position="2490"/>
    </location>
</feature>
<feature type="compositionally biased region" description="Pro residues" evidence="4">
    <location>
        <begin position="2535"/>
        <end position="2551"/>
    </location>
</feature>
<feature type="compositionally biased region" description="Basic and acidic residues" evidence="4">
    <location>
        <begin position="2566"/>
        <end position="2576"/>
    </location>
</feature>
<feature type="modified residue" description="Phosphoserine" evidence="13">
    <location>
        <position position="114"/>
    </location>
</feature>
<feature type="modified residue" description="Phosphoserine" evidence="13">
    <location>
        <position position="117"/>
    </location>
</feature>
<feature type="modified residue" description="Phosphoserine" evidence="13">
    <location>
        <position position="118"/>
    </location>
</feature>
<feature type="modified residue" description="Phosphoserine" evidence="13">
    <location>
        <position position="121"/>
    </location>
</feature>
<feature type="modified residue" description="Phosphoserine" evidence="13">
    <location>
        <position position="155"/>
    </location>
</feature>
<feature type="modified residue" description="Phosphotyrosine" evidence="11">
    <location>
        <position position="177"/>
    </location>
</feature>
<feature type="modified residue" description="Phosphoserine" evidence="2">
    <location>
        <position position="319"/>
    </location>
</feature>
<feature type="modified residue" description="Phosphoserine" evidence="2">
    <location>
        <position position="322"/>
    </location>
</feature>
<feature type="modified residue" description="Phosphoserine" evidence="13">
    <location>
        <position position="384"/>
    </location>
</feature>
<feature type="modified residue" description="Phosphothreonine" evidence="3">
    <location>
        <position position="504"/>
    </location>
</feature>
<feature type="modified residue" description="Phosphoserine" evidence="12 13">
    <location>
        <position position="526"/>
    </location>
</feature>
<feature type="modified residue" description="Phosphoserine" evidence="12 13">
    <location>
        <position position="527"/>
    </location>
</feature>
<feature type="modified residue" description="Phosphoserine" evidence="3">
    <location>
        <position position="604"/>
    </location>
</feature>
<feature type="modified residue" description="Phosphoserine" evidence="3">
    <location>
        <position position="611"/>
    </location>
</feature>
<feature type="modified residue" description="Phosphothreonine" evidence="10 13">
    <location>
        <position position="633"/>
    </location>
</feature>
<feature type="modified residue" description="Phosphoserine" evidence="10">
    <location>
        <position position="644"/>
    </location>
</feature>
<feature type="modified residue" description="Phosphoserine" evidence="10 13">
    <location>
        <position position="667"/>
    </location>
</feature>
<feature type="modified residue" description="Phosphoserine" evidence="13">
    <location>
        <position position="678"/>
    </location>
</feature>
<feature type="modified residue" description="Phosphoserine" evidence="3">
    <location>
        <position position="786"/>
    </location>
</feature>
<feature type="modified residue" description="Phosphoserine" evidence="13">
    <location>
        <position position="873"/>
    </location>
</feature>
<feature type="modified residue" description="Phosphoserine" evidence="13">
    <location>
        <position position="876"/>
    </location>
</feature>
<feature type="modified residue" description="Phosphoserine" evidence="13">
    <location>
        <position position="877"/>
    </location>
</feature>
<feature type="modified residue" description="Phosphoserine" evidence="13">
    <location>
        <position position="890"/>
    </location>
</feature>
<feature type="modified residue" description="Phosphothreonine" evidence="13">
    <location>
        <position position="893"/>
    </location>
</feature>
<feature type="modified residue" description="Phosphoserine" evidence="13">
    <location>
        <position position="895"/>
    </location>
</feature>
<feature type="modified residue" description="Phosphoserine" evidence="13">
    <location>
        <position position="899"/>
    </location>
</feature>
<feature type="modified residue" description="Phosphoserine" evidence="13">
    <location>
        <position position="908"/>
    </location>
</feature>
<feature type="modified residue" description="Phosphoserine" evidence="10 13">
    <location>
        <position position="981"/>
    </location>
</feature>
<feature type="modified residue" description="Phosphoserine" evidence="13">
    <location>
        <position position="991"/>
    </location>
</feature>
<feature type="modified residue" description="Phosphoserine" evidence="13">
    <location>
        <position position="999"/>
    </location>
</feature>
<feature type="modified residue" description="Phosphoserine" evidence="13">
    <location>
        <position position="1008"/>
    </location>
</feature>
<feature type="modified residue" description="Phosphoserine" evidence="2">
    <location>
        <position position="1014"/>
    </location>
</feature>
<feature type="modified residue" description="Phosphoserine" evidence="13">
    <location>
        <position position="1023"/>
    </location>
</feature>
<feature type="modified residue" description="Phosphoserine" evidence="13">
    <location>
        <position position="1062"/>
    </location>
</feature>
<feature type="modified residue" description="Phosphothreonine" evidence="13">
    <location>
        <position position="1068"/>
    </location>
</feature>
<feature type="modified residue" description="Phosphoserine" evidence="13">
    <location>
        <position position="1131"/>
    </location>
</feature>
<feature type="modified residue" description="Phosphoserine" evidence="13">
    <location>
        <position position="1133"/>
    </location>
</feature>
<feature type="modified residue" description="Phosphoserine" evidence="13">
    <location>
        <position position="1147"/>
    </location>
</feature>
<feature type="modified residue" description="Phosphoserine" evidence="3">
    <location>
        <position position="1159"/>
    </location>
</feature>
<feature type="modified residue" description="Phosphoserine" evidence="13">
    <location>
        <position position="1177"/>
    </location>
</feature>
<feature type="modified residue" description="Phosphoserine" evidence="3">
    <location>
        <position position="1187"/>
    </location>
</feature>
<feature type="modified residue" description="Phosphoserine" evidence="3">
    <location>
        <position position="1190"/>
    </location>
</feature>
<feature type="modified residue" description="Phosphoserine" evidence="13">
    <location>
        <position position="1196"/>
    </location>
</feature>
<feature type="modified residue" description="Phosphoserine" evidence="13">
    <location>
        <position position="1205"/>
    </location>
</feature>
<feature type="modified residue" description="Phosphoserine" evidence="2">
    <location>
        <position position="1208"/>
    </location>
</feature>
<feature type="modified residue" description="Phosphoserine" evidence="2">
    <location>
        <position position="1251"/>
    </location>
</feature>
<feature type="modified residue" description="Phosphoserine" evidence="13">
    <location>
        <position position="1289"/>
    </location>
</feature>
<feature type="modified residue" description="Phosphoserine" evidence="13">
    <location>
        <position position="1310"/>
    </location>
</feature>
<feature type="modified residue" description="Phosphoserine" evidence="13">
    <location>
        <position position="1313"/>
    </location>
</feature>
<feature type="modified residue" description="Phosphoserine" evidence="13">
    <location>
        <position position="1316"/>
    </location>
</feature>
<feature type="modified residue" description="Phosphoserine" evidence="13">
    <location>
        <position position="1516"/>
    </location>
</feature>
<feature type="modified residue" description="Phosphoserine" evidence="3">
    <location>
        <position position="1580"/>
    </location>
</feature>
<feature type="modified residue" description="Phosphoserine" evidence="13">
    <location>
        <position position="1606"/>
    </location>
</feature>
<feature type="modified residue" description="Phosphoserine" evidence="3">
    <location>
        <position position="1634"/>
    </location>
</feature>
<feature type="modified residue" description="Phosphoserine" evidence="3">
    <location>
        <position position="1648"/>
    </location>
</feature>
<feature type="modified residue" description="Phosphoserine" evidence="3">
    <location>
        <position position="1720"/>
    </location>
</feature>
<feature type="modified residue" description="Phosphoserine" evidence="13">
    <location>
        <position position="1747"/>
    </location>
</feature>
<feature type="modified residue" description="Phosphoserine" evidence="13">
    <location>
        <position position="1762"/>
    </location>
</feature>
<feature type="modified residue" description="Phosphoserine" evidence="10 13">
    <location>
        <position position="1768"/>
    </location>
</feature>
<feature type="modified residue" description="Phosphoserine" evidence="10 13">
    <location>
        <position position="1772"/>
    </location>
</feature>
<feature type="modified residue" description="Phosphothreonine" evidence="13">
    <location>
        <position position="1777"/>
    </location>
</feature>
<feature type="modified residue" description="Phosphoserine" evidence="13">
    <location>
        <position position="1783"/>
    </location>
</feature>
<feature type="modified residue" description="Phosphoserine" evidence="13">
    <location>
        <position position="1789"/>
    </location>
</feature>
<feature type="modified residue" description="Phosphoserine" evidence="2">
    <location>
        <position position="1902"/>
    </location>
</feature>
<feature type="modified residue" description="Phosphothreonine" evidence="3">
    <location>
        <position position="1928"/>
    </location>
</feature>
<feature type="modified residue" description="Phosphoserine" evidence="3">
    <location>
        <position position="1993"/>
    </location>
</feature>
<feature type="modified residue" description="Phosphothreonine" evidence="2">
    <location>
        <position position="2031"/>
    </location>
</feature>
<feature type="modified residue" description="Phosphoserine" evidence="3">
    <location>
        <position position="2048"/>
    </location>
</feature>
<feature type="modified residue" description="Phosphoserine" evidence="13">
    <location>
        <position position="2082"/>
    </location>
</feature>
<feature type="modified residue" description="Phosphoserine" evidence="2">
    <location>
        <position position="2209"/>
    </location>
</feature>
<feature type="modified residue" description="Phosphoserine" evidence="2">
    <location>
        <position position="2226"/>
    </location>
</feature>
<feature type="modified residue" description="Phosphoserine" evidence="2">
    <location>
        <position position="2230"/>
    </location>
</feature>
<feature type="modified residue" description="Phosphoserine" evidence="2">
    <location>
        <position position="2233"/>
    </location>
</feature>
<feature type="modified residue" description="Phosphoserine" evidence="2">
    <location>
        <position position="2234"/>
    </location>
</feature>
<feature type="modified residue" description="Phosphoserine" evidence="3">
    <location>
        <position position="2425"/>
    </location>
</feature>
<feature type="modified residue" description="Phosphoserine" evidence="3">
    <location>
        <position position="2623"/>
    </location>
</feature>
<feature type="modified residue" description="Phosphoserine" evidence="3">
    <location>
        <position position="2637"/>
    </location>
</feature>
<feature type="splice variant" id="VSP_003201" description="In isoform 2." evidence="8">
    <original>M</original>
    <variation>METTPELGLQSLGAPPAQNPAEPLCEAGAAVAAARWDLRKYSLLIVIGDIGTESQLRAVRAHLEQGILSWNIDLSSFDLNQQLRLFITRHLAHFSSEVKGQRTLCHQSETLETIILVNPTADSISSEVHHLLSSPSAHKLLILSGQTLEPEGDLILQSGTYSYQNFAQVLHKPEIAQLLSNRDPGIQAFLTVSCLGEGDWSHLGLSSSQETLHLRLNPEPVLPTM</variation>
    <location>
        <position position="1"/>
    </location>
</feature>
<feature type="sequence conflict" description="In Ref. 1; BAE27940." evidence="9" ref="1">
    <original>R</original>
    <variation>C</variation>
    <location>
        <position position="349"/>
    </location>
</feature>
<feature type="helix" evidence="14">
    <location>
        <begin position="1877"/>
        <end position="1880"/>
    </location>
</feature>
<feature type="helix" evidence="14">
    <location>
        <begin position="1882"/>
        <end position="1884"/>
    </location>
</feature>
<dbReference type="EMBL" id="AK147474">
    <property type="protein sequence ID" value="BAE27940.1"/>
    <property type="molecule type" value="mRNA"/>
</dbReference>
<dbReference type="EMBL" id="AK160546">
    <property type="protein sequence ID" value="BAE35863.1"/>
    <property type="molecule type" value="mRNA"/>
</dbReference>
<dbReference type="EMBL" id="AK163468">
    <property type="protein sequence ID" value="BAE37354.1"/>
    <property type="molecule type" value="mRNA"/>
</dbReference>
<dbReference type="EMBL" id="AL845466">
    <property type="status" value="NOT_ANNOTATED_CDS"/>
    <property type="molecule type" value="Genomic_DNA"/>
</dbReference>
<dbReference type="EMBL" id="AF182211">
    <property type="protein sequence ID" value="AAF06164.1"/>
    <property type="molecule type" value="Genomic_DNA"/>
</dbReference>
<dbReference type="EMBL" id="AF182208">
    <property type="protein sequence ID" value="AAF06164.1"/>
    <property type="status" value="JOINED"/>
    <property type="molecule type" value="Genomic_DNA"/>
</dbReference>
<dbReference type="EMBL" id="AF182209">
    <property type="protein sequence ID" value="AAF06164.1"/>
    <property type="status" value="JOINED"/>
    <property type="molecule type" value="Genomic_DNA"/>
</dbReference>
<dbReference type="EMBL" id="AF182211">
    <property type="protein sequence ID" value="AAF06163.1"/>
    <property type="molecule type" value="Genomic_DNA"/>
</dbReference>
<dbReference type="EMBL" id="AF182213">
    <property type="protein sequence ID" value="AAD55790.1"/>
    <property type="molecule type" value="mRNA"/>
</dbReference>
<dbReference type="EMBL" id="AF182212">
    <property type="protein sequence ID" value="AAD55789.1"/>
    <property type="molecule type" value="mRNA"/>
</dbReference>
<dbReference type="CCDS" id="CCDS50685.1">
    <molecule id="Q9QYR6-1"/>
</dbReference>
<dbReference type="RefSeq" id="NP_001166977.1">
    <molecule id="Q9QYR6-1"/>
    <property type="nucleotide sequence ID" value="NM_001173506.1"/>
</dbReference>
<dbReference type="RefSeq" id="NP_115769.1">
    <property type="nucleotide sequence ID" value="NM_032393.2"/>
</dbReference>
<dbReference type="PDB" id="5GNV">
    <property type="method" value="X-ray"/>
    <property type="resolution" value="2.60 A"/>
    <property type="chains" value="B=1866-1891"/>
</dbReference>
<dbReference type="PDBsum" id="5GNV"/>
<dbReference type="SMR" id="Q9QYR6"/>
<dbReference type="BioGRID" id="201583">
    <property type="interactions" value="29"/>
</dbReference>
<dbReference type="FunCoup" id="Q9QYR6">
    <property type="interactions" value="916"/>
</dbReference>
<dbReference type="IntAct" id="Q9QYR6">
    <property type="interactions" value="7"/>
</dbReference>
<dbReference type="MINT" id="Q9QYR6"/>
<dbReference type="STRING" id="10090.ENSMUSP00000092223"/>
<dbReference type="GlyGen" id="Q9QYR6">
    <property type="glycosylation" value="10 sites, 1 O-linked glycan (5 sites)"/>
</dbReference>
<dbReference type="iPTMnet" id="Q9QYR6"/>
<dbReference type="PhosphoSitePlus" id="Q9QYR6"/>
<dbReference type="SwissPalm" id="Q9QYR6"/>
<dbReference type="jPOST" id="Q9QYR6"/>
<dbReference type="PaxDb" id="10090-ENSMUSP00000092223"/>
<dbReference type="ProteomicsDB" id="292166">
    <molecule id="Q9QYR6-1"/>
</dbReference>
<dbReference type="ProteomicsDB" id="292167">
    <molecule id="Q9QYR6-2"/>
</dbReference>
<dbReference type="Pumba" id="Q9QYR6"/>
<dbReference type="Antibodypedia" id="6277">
    <property type="antibodies" value="128 antibodies from 24 providers"/>
</dbReference>
<dbReference type="DNASU" id="17754"/>
<dbReference type="Ensembl" id="ENSMUST00000110639.8">
    <molecule id="Q9QYR6-1"/>
    <property type="protein sequence ID" value="ENSMUSP00000106269.2"/>
    <property type="gene ID" value="ENSMUSG00000027254.14"/>
</dbReference>
<dbReference type="GeneID" id="17754"/>
<dbReference type="KEGG" id="mmu:17754"/>
<dbReference type="UCSC" id="uc008lyj.2">
    <molecule id="Q9QYR6-1"/>
    <property type="organism name" value="mouse"/>
</dbReference>
<dbReference type="AGR" id="MGI:1306776"/>
<dbReference type="CTD" id="4130"/>
<dbReference type="MGI" id="MGI:1306776">
    <property type="gene designation" value="Map1a"/>
</dbReference>
<dbReference type="VEuPathDB" id="HostDB:ENSMUSG00000027254"/>
<dbReference type="eggNOG" id="KOG3592">
    <property type="taxonomic scope" value="Eukaryota"/>
</dbReference>
<dbReference type="GeneTree" id="ENSGT00940000158701"/>
<dbReference type="InParanoid" id="Q9QYR6"/>
<dbReference type="OrthoDB" id="5371837at2759"/>
<dbReference type="BioGRID-ORCS" id="17754">
    <property type="hits" value="1 hit in 77 CRISPR screens"/>
</dbReference>
<dbReference type="CD-CODE" id="CE726F99">
    <property type="entry name" value="Postsynaptic density"/>
</dbReference>
<dbReference type="ChiTaRS" id="Map1a">
    <property type="organism name" value="mouse"/>
</dbReference>
<dbReference type="PRO" id="PR:Q9QYR6"/>
<dbReference type="Proteomes" id="UP000000589">
    <property type="component" value="Chromosome 2"/>
</dbReference>
<dbReference type="RNAct" id="Q9QYR6">
    <property type="molecule type" value="protein"/>
</dbReference>
<dbReference type="Bgee" id="ENSMUSG00000027254">
    <property type="expression patterns" value="Expressed in primary visual cortex and 197 other cell types or tissues"/>
</dbReference>
<dbReference type="ExpressionAtlas" id="Q9QYR6">
    <property type="expression patterns" value="baseline and differential"/>
</dbReference>
<dbReference type="GO" id="GO:1904115">
    <property type="term" value="C:axon cytoplasm"/>
    <property type="evidence" value="ECO:0007669"/>
    <property type="project" value="GOC"/>
</dbReference>
<dbReference type="GO" id="GO:0043194">
    <property type="term" value="C:axon initial segment"/>
    <property type="evidence" value="ECO:0000314"/>
    <property type="project" value="ARUK-UCL"/>
</dbReference>
<dbReference type="GO" id="GO:0005829">
    <property type="term" value="C:cytosol"/>
    <property type="evidence" value="ECO:0000314"/>
    <property type="project" value="MGI"/>
</dbReference>
<dbReference type="GO" id="GO:0030425">
    <property type="term" value="C:dendrite"/>
    <property type="evidence" value="ECO:0000314"/>
    <property type="project" value="ARUK-UCL"/>
</dbReference>
<dbReference type="GO" id="GO:1901588">
    <property type="term" value="C:dendritic microtubule"/>
    <property type="evidence" value="ECO:0000314"/>
    <property type="project" value="ARUK-UCL"/>
</dbReference>
<dbReference type="GO" id="GO:0043025">
    <property type="term" value="C:neuronal cell body"/>
    <property type="evidence" value="ECO:0000314"/>
    <property type="project" value="ARUK-UCL"/>
</dbReference>
<dbReference type="GO" id="GO:0001750">
    <property type="term" value="C:photoreceptor outer segment"/>
    <property type="evidence" value="ECO:0000314"/>
    <property type="project" value="MGI"/>
</dbReference>
<dbReference type="GO" id="GO:0014069">
    <property type="term" value="C:postsynaptic density"/>
    <property type="evidence" value="ECO:0000314"/>
    <property type="project" value="MGI"/>
</dbReference>
<dbReference type="GO" id="GO:0003779">
    <property type="term" value="F:actin binding"/>
    <property type="evidence" value="ECO:0000314"/>
    <property type="project" value="ARUK-UCL"/>
</dbReference>
<dbReference type="GO" id="GO:0008093">
    <property type="term" value="F:cytoskeletal anchor activity"/>
    <property type="evidence" value="ECO:0000314"/>
    <property type="project" value="ARUK-UCL"/>
</dbReference>
<dbReference type="GO" id="GO:0035255">
    <property type="term" value="F:ionotropic glutamate receptor binding"/>
    <property type="evidence" value="ECO:0000353"/>
    <property type="project" value="ARUK-UCL"/>
</dbReference>
<dbReference type="GO" id="GO:0008017">
    <property type="term" value="F:microtubule binding"/>
    <property type="evidence" value="ECO:0000314"/>
    <property type="project" value="MGI"/>
</dbReference>
<dbReference type="GO" id="GO:0015631">
    <property type="term" value="F:tubulin binding"/>
    <property type="evidence" value="ECO:0000314"/>
    <property type="project" value="ARUK-UCL"/>
</dbReference>
<dbReference type="GO" id="GO:0099641">
    <property type="term" value="P:anterograde axonal protein transport"/>
    <property type="evidence" value="ECO:0000316"/>
    <property type="project" value="ARUK-UCL"/>
</dbReference>
<dbReference type="GO" id="GO:0008306">
    <property type="term" value="P:associative learning"/>
    <property type="evidence" value="ECO:0000315"/>
    <property type="project" value="ARUK-UCL"/>
</dbReference>
<dbReference type="GO" id="GO:0007613">
    <property type="term" value="P:memory"/>
    <property type="evidence" value="ECO:0000315"/>
    <property type="project" value="ARUK-UCL"/>
</dbReference>
<dbReference type="GO" id="GO:0000226">
    <property type="term" value="P:microtubule cytoskeleton organization"/>
    <property type="evidence" value="ECO:0000315"/>
    <property type="project" value="ARUK-UCL"/>
</dbReference>
<dbReference type="GO" id="GO:0032435">
    <property type="term" value="P:negative regulation of proteasomal ubiquitin-dependent protein catabolic process"/>
    <property type="evidence" value="ECO:0000314"/>
    <property type="project" value="ARUK-UCL"/>
</dbReference>
<dbReference type="GO" id="GO:1902817">
    <property type="term" value="P:negative regulation of protein localization to microtubule"/>
    <property type="evidence" value="ECO:0000315"/>
    <property type="project" value="ARUK-UCL"/>
</dbReference>
<dbReference type="GO" id="GO:0070050">
    <property type="term" value="P:neuron cellular homeostasis"/>
    <property type="evidence" value="ECO:0000315"/>
    <property type="project" value="ARUK-UCL"/>
</dbReference>
<dbReference type="GO" id="GO:1990535">
    <property type="term" value="P:neuron projection maintenance"/>
    <property type="evidence" value="ECO:0000315"/>
    <property type="project" value="ARUK-UCL"/>
</dbReference>
<dbReference type="GO" id="GO:0045494">
    <property type="term" value="P:photoreceptor cell maintenance"/>
    <property type="evidence" value="ECO:0000316"/>
    <property type="project" value="MGI"/>
</dbReference>
<dbReference type="GO" id="GO:1903829">
    <property type="term" value="P:positive regulation of protein localization"/>
    <property type="evidence" value="ECO:0000315"/>
    <property type="project" value="ARUK-UCL"/>
</dbReference>
<dbReference type="GO" id="GO:2000010">
    <property type="term" value="P:positive regulation of protein localization to cell surface"/>
    <property type="evidence" value="ECO:0000315"/>
    <property type="project" value="ARUK-UCL"/>
</dbReference>
<dbReference type="GO" id="GO:0048167">
    <property type="term" value="P:regulation of synaptic plasticity"/>
    <property type="evidence" value="ECO:0000315"/>
    <property type="project" value="ARUK-UCL"/>
</dbReference>
<dbReference type="GO" id="GO:0099642">
    <property type="term" value="P:retrograde axonal protein transport"/>
    <property type="evidence" value="ECO:0000316"/>
    <property type="project" value="ARUK-UCL"/>
</dbReference>
<dbReference type="GO" id="GO:0007605">
    <property type="term" value="P:sensory perception of sound"/>
    <property type="evidence" value="ECO:0000314"/>
    <property type="project" value="MGI"/>
</dbReference>
<dbReference type="GO" id="GO:0050882">
    <property type="term" value="P:voluntary musculoskeletal movement"/>
    <property type="evidence" value="ECO:0000315"/>
    <property type="project" value="ARUK-UCL"/>
</dbReference>
<dbReference type="InterPro" id="IPR026074">
    <property type="entry name" value="MAP1"/>
</dbReference>
<dbReference type="InterPro" id="IPR036866">
    <property type="entry name" value="RibonucZ/Hydroxyglut_hydro"/>
</dbReference>
<dbReference type="PANTHER" id="PTHR13843">
    <property type="entry name" value="MICROTUBULE-ASSOCIATED PROTEIN"/>
    <property type="match status" value="1"/>
</dbReference>
<dbReference type="PANTHER" id="PTHR13843:SF6">
    <property type="entry name" value="MICROTUBULE-ASSOCIATED PROTEIN 1A"/>
    <property type="match status" value="1"/>
</dbReference>
<dbReference type="Pfam" id="PF25281">
    <property type="entry name" value="MBL_MAP1B"/>
    <property type="match status" value="1"/>
</dbReference>
<dbReference type="SUPFAM" id="SSF56281">
    <property type="entry name" value="Metallo-hydrolase/oxidoreductase"/>
    <property type="match status" value="1"/>
</dbReference>
<name>MAP1A_MOUSE</name>
<comment type="function">
    <text>Structural protein involved in the filamentous cross-bridging between microtubules and other skeletal elements.</text>
</comment>
<comment type="subunit">
    <text evidence="2 6">3 different light chains, LC1 (a cleavage product of MAP1B), LC2 (a cleavage product of MAP1A) and LC3 (produced by one of the MAP1LC3 genes), can associate with the MAP1A or MAP1B heavy chains. Interacts with guanylate kinase-like domain of DLG1, DLG2 and DLG4. Binds to CSNK1D (By similarity). Interacts with TIAM2.</text>
</comment>
<comment type="subunit">
    <molecule>MAP1 light chain LC2</molecule>
    <text evidence="7">Interacts with ELAVL4.</text>
</comment>
<comment type="subcellular location">
    <subcellularLocation>
        <location evidence="9">Cytoplasm</location>
        <location evidence="9">Cytoskeleton</location>
    </subcellularLocation>
</comment>
<comment type="alternative products">
    <event type="alternative splicing"/>
    <isoform>
        <id>Q9QYR6-1</id>
        <name>1</name>
        <sequence type="displayed"/>
    </isoform>
    <isoform>
        <id>Q9QYR6-2</id>
        <name>2</name>
        <sequence type="described" ref="VSP_003201"/>
    </isoform>
</comment>
<comment type="tissue specificity">
    <text evidence="5">Both isoforms highly expressed in brain, and to a lesser extent in embryo. Isoform 1 is also expressed at a low level in other tissues including heart and muscle.</text>
</comment>
<comment type="domain">
    <text>The basic region containing the repeats may be responsible for the binding of MAP1A to microtubules.</text>
</comment>
<comment type="PTM">
    <text evidence="1">Phosphorylated by CSNK1D.</text>
</comment>
<comment type="PTM">
    <text evidence="1">LC2 is generated from MAP1A by proteolytic processing. It is free to associate with both MAP1A and MAP1B (By similarity).</text>
</comment>
<comment type="similarity">
    <text evidence="9">Belongs to the MAP1 family.</text>
</comment>
<reference key="1">
    <citation type="journal article" date="2005" name="Science">
        <title>The transcriptional landscape of the mammalian genome.</title>
        <authorList>
            <person name="Carninci P."/>
            <person name="Kasukawa T."/>
            <person name="Katayama S."/>
            <person name="Gough J."/>
            <person name="Frith M.C."/>
            <person name="Maeda N."/>
            <person name="Oyama R."/>
            <person name="Ravasi T."/>
            <person name="Lenhard B."/>
            <person name="Wells C."/>
            <person name="Kodzius R."/>
            <person name="Shimokawa K."/>
            <person name="Bajic V.B."/>
            <person name="Brenner S.E."/>
            <person name="Batalov S."/>
            <person name="Forrest A.R."/>
            <person name="Zavolan M."/>
            <person name="Davis M.J."/>
            <person name="Wilming L.G."/>
            <person name="Aidinis V."/>
            <person name="Allen J.E."/>
            <person name="Ambesi-Impiombato A."/>
            <person name="Apweiler R."/>
            <person name="Aturaliya R.N."/>
            <person name="Bailey T.L."/>
            <person name="Bansal M."/>
            <person name="Baxter L."/>
            <person name="Beisel K.W."/>
            <person name="Bersano T."/>
            <person name="Bono H."/>
            <person name="Chalk A.M."/>
            <person name="Chiu K.P."/>
            <person name="Choudhary V."/>
            <person name="Christoffels A."/>
            <person name="Clutterbuck D.R."/>
            <person name="Crowe M.L."/>
            <person name="Dalla E."/>
            <person name="Dalrymple B.P."/>
            <person name="de Bono B."/>
            <person name="Della Gatta G."/>
            <person name="di Bernardo D."/>
            <person name="Down T."/>
            <person name="Engstrom P."/>
            <person name="Fagiolini M."/>
            <person name="Faulkner G."/>
            <person name="Fletcher C.F."/>
            <person name="Fukushima T."/>
            <person name="Furuno M."/>
            <person name="Futaki S."/>
            <person name="Gariboldi M."/>
            <person name="Georgii-Hemming P."/>
            <person name="Gingeras T.R."/>
            <person name="Gojobori T."/>
            <person name="Green R.E."/>
            <person name="Gustincich S."/>
            <person name="Harbers M."/>
            <person name="Hayashi Y."/>
            <person name="Hensch T.K."/>
            <person name="Hirokawa N."/>
            <person name="Hill D."/>
            <person name="Huminiecki L."/>
            <person name="Iacono M."/>
            <person name="Ikeo K."/>
            <person name="Iwama A."/>
            <person name="Ishikawa T."/>
            <person name="Jakt M."/>
            <person name="Kanapin A."/>
            <person name="Katoh M."/>
            <person name="Kawasawa Y."/>
            <person name="Kelso J."/>
            <person name="Kitamura H."/>
            <person name="Kitano H."/>
            <person name="Kollias G."/>
            <person name="Krishnan S.P."/>
            <person name="Kruger A."/>
            <person name="Kummerfeld S.K."/>
            <person name="Kurochkin I.V."/>
            <person name="Lareau L.F."/>
            <person name="Lazarevic D."/>
            <person name="Lipovich L."/>
            <person name="Liu J."/>
            <person name="Liuni S."/>
            <person name="McWilliam S."/>
            <person name="Madan Babu M."/>
            <person name="Madera M."/>
            <person name="Marchionni L."/>
            <person name="Matsuda H."/>
            <person name="Matsuzawa S."/>
            <person name="Miki H."/>
            <person name="Mignone F."/>
            <person name="Miyake S."/>
            <person name="Morris K."/>
            <person name="Mottagui-Tabar S."/>
            <person name="Mulder N."/>
            <person name="Nakano N."/>
            <person name="Nakauchi H."/>
            <person name="Ng P."/>
            <person name="Nilsson R."/>
            <person name="Nishiguchi S."/>
            <person name="Nishikawa S."/>
            <person name="Nori F."/>
            <person name="Ohara O."/>
            <person name="Okazaki Y."/>
            <person name="Orlando V."/>
            <person name="Pang K.C."/>
            <person name="Pavan W.J."/>
            <person name="Pavesi G."/>
            <person name="Pesole G."/>
            <person name="Petrovsky N."/>
            <person name="Piazza S."/>
            <person name="Reed J."/>
            <person name="Reid J.F."/>
            <person name="Ring B.Z."/>
            <person name="Ringwald M."/>
            <person name="Rost B."/>
            <person name="Ruan Y."/>
            <person name="Salzberg S.L."/>
            <person name="Sandelin A."/>
            <person name="Schneider C."/>
            <person name="Schoenbach C."/>
            <person name="Sekiguchi K."/>
            <person name="Semple C.A."/>
            <person name="Seno S."/>
            <person name="Sessa L."/>
            <person name="Sheng Y."/>
            <person name="Shibata Y."/>
            <person name="Shimada H."/>
            <person name="Shimada K."/>
            <person name="Silva D."/>
            <person name="Sinclair B."/>
            <person name="Sperling S."/>
            <person name="Stupka E."/>
            <person name="Sugiura K."/>
            <person name="Sultana R."/>
            <person name="Takenaka Y."/>
            <person name="Taki K."/>
            <person name="Tammoja K."/>
            <person name="Tan S.L."/>
            <person name="Tang S."/>
            <person name="Taylor M.S."/>
            <person name="Tegner J."/>
            <person name="Teichmann S.A."/>
            <person name="Ueda H.R."/>
            <person name="van Nimwegen E."/>
            <person name="Verardo R."/>
            <person name="Wei C.L."/>
            <person name="Yagi K."/>
            <person name="Yamanishi H."/>
            <person name="Zabarovsky E."/>
            <person name="Zhu S."/>
            <person name="Zimmer A."/>
            <person name="Hide W."/>
            <person name="Bult C."/>
            <person name="Grimmond S.M."/>
            <person name="Teasdale R.D."/>
            <person name="Liu E.T."/>
            <person name="Brusic V."/>
            <person name="Quackenbush J."/>
            <person name="Wahlestedt C."/>
            <person name="Mattick J.S."/>
            <person name="Hume D.A."/>
            <person name="Kai C."/>
            <person name="Sasaki D."/>
            <person name="Tomaru Y."/>
            <person name="Fukuda S."/>
            <person name="Kanamori-Katayama M."/>
            <person name="Suzuki M."/>
            <person name="Aoki J."/>
            <person name="Arakawa T."/>
            <person name="Iida J."/>
            <person name="Imamura K."/>
            <person name="Itoh M."/>
            <person name="Kato T."/>
            <person name="Kawaji H."/>
            <person name="Kawagashira N."/>
            <person name="Kawashima T."/>
            <person name="Kojima M."/>
            <person name="Kondo S."/>
            <person name="Konno H."/>
            <person name="Nakano K."/>
            <person name="Ninomiya N."/>
            <person name="Nishio T."/>
            <person name="Okada M."/>
            <person name="Plessy C."/>
            <person name="Shibata K."/>
            <person name="Shiraki T."/>
            <person name="Suzuki S."/>
            <person name="Tagami M."/>
            <person name="Waki K."/>
            <person name="Watahiki A."/>
            <person name="Okamura-Oho Y."/>
            <person name="Suzuki H."/>
            <person name="Kawai J."/>
            <person name="Hayashizaki Y."/>
        </authorList>
    </citation>
    <scope>NUCLEOTIDE SEQUENCE [LARGE SCALE MRNA] (ISOFORM 1)</scope>
    <source>
        <strain>C57BL/6J</strain>
        <tissue>Corpora quadrigemina</tissue>
    </source>
</reference>
<reference key="2">
    <citation type="journal article" date="2009" name="PLoS Biol.">
        <title>Lineage-specific biology revealed by a finished genome assembly of the mouse.</title>
        <authorList>
            <person name="Church D.M."/>
            <person name="Goodstadt L."/>
            <person name="Hillier L.W."/>
            <person name="Zody M.C."/>
            <person name="Goldstein S."/>
            <person name="She X."/>
            <person name="Bult C.J."/>
            <person name="Agarwala R."/>
            <person name="Cherry J.L."/>
            <person name="DiCuccio M."/>
            <person name="Hlavina W."/>
            <person name="Kapustin Y."/>
            <person name="Meric P."/>
            <person name="Maglott D."/>
            <person name="Birtle Z."/>
            <person name="Marques A.C."/>
            <person name="Graves T."/>
            <person name="Zhou S."/>
            <person name="Teague B."/>
            <person name="Potamousis K."/>
            <person name="Churas C."/>
            <person name="Place M."/>
            <person name="Herschleb J."/>
            <person name="Runnheim R."/>
            <person name="Forrest D."/>
            <person name="Amos-Landgraf J."/>
            <person name="Schwartz D.C."/>
            <person name="Cheng Z."/>
            <person name="Lindblad-Toh K."/>
            <person name="Eichler E.E."/>
            <person name="Ponting C.P."/>
        </authorList>
    </citation>
    <scope>NUCLEOTIDE SEQUENCE [LARGE SCALE GENOMIC DNA]</scope>
    <source>
        <strain>C57BL/6J</strain>
    </source>
</reference>
<reference key="3">
    <citation type="journal article" date="2001" name="Biochim. Biophys. Acta">
        <title>Characterization of two promoters that regulate alternative transcripts in the microtubule-associated protein (MAP) 1A gene.</title>
        <authorList>
            <person name="Nakayama A."/>
            <person name="Odajima T."/>
            <person name="Murakami H."/>
            <person name="Mori N."/>
            <person name="Takahashi M."/>
        </authorList>
    </citation>
    <scope>NUCLEOTIDE SEQUENCE [GENOMIC DNA / MRNA] OF 1-224 (ISOFORMS 1 AND 2)</scope>
    <scope>TISSUE SPECIFICITY</scope>
    <source>
        <tissue>Brain</tissue>
    </source>
</reference>
<reference key="4">
    <citation type="journal article" date="2006" name="Mol. Cell. Proteomics">
        <title>Comprehensive identification of phosphorylation sites in postsynaptic density preparations.</title>
        <authorList>
            <person name="Trinidad J.C."/>
            <person name="Specht C.G."/>
            <person name="Thalhammer A."/>
            <person name="Schoepfer R."/>
            <person name="Burlingame A.L."/>
        </authorList>
    </citation>
    <scope>PHOSPHORYLATION [LARGE SCALE ANALYSIS] AT THR-633; SER-644; SER-667; SER-981; SER-1768 AND SER-1772</scope>
    <scope>IDENTIFICATION BY MASS SPECTROMETRY [LARGE SCALE ANALYSIS]</scope>
    <source>
        <tissue>Brain</tissue>
    </source>
</reference>
<reference key="5">
    <citation type="journal article" date="2007" name="Biochem. Biophys. Res. Commun.">
        <title>Rho-kinase modulates the function of STEF, a Rac GEF, through its phosphorylation.</title>
        <authorList>
            <person name="Takefuji M."/>
            <person name="Mori K."/>
            <person name="Morita Y."/>
            <person name="Arimura N."/>
            <person name="Nishimura T."/>
            <person name="Nakayama M."/>
            <person name="Hoshino M."/>
            <person name="Iwamatsu A."/>
            <person name="Murohara T."/>
            <person name="Kaibuchi K."/>
            <person name="Amano M."/>
        </authorList>
    </citation>
    <scope>INTERACTION WITH TIAM2</scope>
</reference>
<reference key="6">
    <citation type="journal article" date="2008" name="J. Proteome Res.">
        <title>Large-scale identification and evolution indexing of tyrosine phosphorylation sites from murine brain.</title>
        <authorList>
            <person name="Ballif B.A."/>
            <person name="Carey G.R."/>
            <person name="Sunyaev S.R."/>
            <person name="Gygi S.P."/>
        </authorList>
    </citation>
    <scope>PHOSPHORYLATION [LARGE SCALE ANALYSIS] AT TYR-177</scope>
    <scope>IDENTIFICATION BY MASS SPECTROMETRY [LARGE SCALE ANALYSIS]</scope>
    <source>
        <tissue>Brain</tissue>
    </source>
</reference>
<reference key="7">
    <citation type="journal article" date="2009" name="Mol. Cell. Proteomics">
        <title>Large scale localization of protein phosphorylation by use of electron capture dissociation mass spectrometry.</title>
        <authorList>
            <person name="Sweet S.M."/>
            <person name="Bailey C.M."/>
            <person name="Cunningham D.L."/>
            <person name="Heath J.K."/>
            <person name="Cooper H.J."/>
        </authorList>
    </citation>
    <scope>PHOSPHORYLATION [LARGE SCALE ANALYSIS] AT SER-526 AND SER-527</scope>
    <scope>IDENTIFICATION BY MASS SPECTROMETRY [LARGE SCALE ANALYSIS]</scope>
    <source>
        <tissue>Embryonic fibroblast</tissue>
    </source>
</reference>
<reference key="8">
    <citation type="journal article" date="2010" name="Cell">
        <title>A tissue-specific atlas of mouse protein phosphorylation and expression.</title>
        <authorList>
            <person name="Huttlin E.L."/>
            <person name="Jedrychowski M.P."/>
            <person name="Elias J.E."/>
            <person name="Goswami T."/>
            <person name="Rad R."/>
            <person name="Beausoleil S.A."/>
            <person name="Villen J."/>
            <person name="Haas W."/>
            <person name="Sowa M.E."/>
            <person name="Gygi S.P."/>
        </authorList>
    </citation>
    <scope>PHOSPHORYLATION [LARGE SCALE ANALYSIS] AT SER-114; SER-117; SER-118; SER-121; SER-155; SER-384; SER-526; SER-527; THR-633; SER-667; SER-678; SER-873; SER-876; SER-877; SER-890; THR-893; SER-895; SER-899; SER-908; SER-981; SER-991; SER-999; SER-1008; SER-1023; SER-1062; THR-1068; SER-1131; SER-1133; SER-1147; SER-1177; SER-1196; SER-1205; SER-1289; SER-1310; SER-1313; SER-1316; SER-1516; SER-1606; SER-1747; SER-1762; SER-1768; SER-1772; THR-1777; SER-1783; SER-1789 AND SER-2082</scope>
    <scope>IDENTIFICATION BY MASS SPECTROMETRY [LARGE SCALE ANALYSIS]</scope>
    <source>
        <tissue>Brain</tissue>
        <tissue>Brown adipose tissue</tissue>
        <tissue>Heart</tissue>
        <tissue>Kidney</tissue>
        <tissue>Lung</tissue>
        <tissue>Spleen</tissue>
        <tissue>Testis</tissue>
    </source>
</reference>
<reference key="9">
    <citation type="journal article" date="2011" name="Biochimie">
        <title>Microtubule association of a neuronal RNA-binding protein HuD through its binding to the light chain of MAP1B.</title>
        <authorList>
            <person name="Fujiwara Y."/>
            <person name="Kasashima K."/>
            <person name="Saito K."/>
            <person name="Fukuda M."/>
            <person name="Fukao A."/>
            <person name="Sasano Y."/>
            <person name="Inoue K."/>
            <person name="Fujiwara T."/>
            <person name="Sakamoto H."/>
        </authorList>
    </citation>
    <scope>INTERACTION WITH ELAVL4</scope>
</reference>